<name>RL36_STRTD</name>
<comment type="similarity">
    <text evidence="1">Belongs to the bacterial ribosomal protein bL36 family.</text>
</comment>
<sequence length="38" mass="4451">MKVRPSVKPICEYCKVIRRNGRVMVICPTNPKHKQRQG</sequence>
<reference key="1">
    <citation type="journal article" date="2006" name="Proc. Natl. Acad. Sci. U.S.A.">
        <title>Comparative genomics of the lactic acid bacteria.</title>
        <authorList>
            <person name="Makarova K.S."/>
            <person name="Slesarev A."/>
            <person name="Wolf Y.I."/>
            <person name="Sorokin A."/>
            <person name="Mirkin B."/>
            <person name="Koonin E.V."/>
            <person name="Pavlov A."/>
            <person name="Pavlova N."/>
            <person name="Karamychev V."/>
            <person name="Polouchine N."/>
            <person name="Shakhova V."/>
            <person name="Grigoriev I."/>
            <person name="Lou Y."/>
            <person name="Rohksar D."/>
            <person name="Lucas S."/>
            <person name="Huang K."/>
            <person name="Goodstein D.M."/>
            <person name="Hawkins T."/>
            <person name="Plengvidhya V."/>
            <person name="Welker D."/>
            <person name="Hughes J."/>
            <person name="Goh Y."/>
            <person name="Benson A."/>
            <person name="Baldwin K."/>
            <person name="Lee J.-H."/>
            <person name="Diaz-Muniz I."/>
            <person name="Dosti B."/>
            <person name="Smeianov V."/>
            <person name="Wechter W."/>
            <person name="Barabote R."/>
            <person name="Lorca G."/>
            <person name="Altermann E."/>
            <person name="Barrangou R."/>
            <person name="Ganesan B."/>
            <person name="Xie Y."/>
            <person name="Rawsthorne H."/>
            <person name="Tamir D."/>
            <person name="Parker C."/>
            <person name="Breidt F."/>
            <person name="Broadbent J.R."/>
            <person name="Hutkins R."/>
            <person name="O'Sullivan D."/>
            <person name="Steele J."/>
            <person name="Unlu G."/>
            <person name="Saier M.H. Jr."/>
            <person name="Klaenhammer T."/>
            <person name="Richardson P."/>
            <person name="Kozyavkin S."/>
            <person name="Weimer B.C."/>
            <person name="Mills D.A."/>
        </authorList>
    </citation>
    <scope>NUCLEOTIDE SEQUENCE [LARGE SCALE GENOMIC DNA]</scope>
    <source>
        <strain>ATCC BAA-491 / LMD-9</strain>
    </source>
</reference>
<proteinExistence type="inferred from homology"/>
<evidence type="ECO:0000255" key="1">
    <source>
        <dbReference type="HAMAP-Rule" id="MF_00251"/>
    </source>
</evidence>
<evidence type="ECO:0000305" key="2"/>
<keyword id="KW-0687">Ribonucleoprotein</keyword>
<keyword id="KW-0689">Ribosomal protein</keyword>
<organism>
    <name type="scientific">Streptococcus thermophilus (strain ATCC BAA-491 / LMD-9)</name>
    <dbReference type="NCBI Taxonomy" id="322159"/>
    <lineage>
        <taxon>Bacteria</taxon>
        <taxon>Bacillati</taxon>
        <taxon>Bacillota</taxon>
        <taxon>Bacilli</taxon>
        <taxon>Lactobacillales</taxon>
        <taxon>Streptococcaceae</taxon>
        <taxon>Streptococcus</taxon>
    </lineage>
</organism>
<feature type="chain" id="PRO_0000302315" description="Large ribosomal subunit protein bL36">
    <location>
        <begin position="1"/>
        <end position="38"/>
    </location>
</feature>
<gene>
    <name evidence="1" type="primary">rpmJ</name>
    <name type="ordered locus">STER_1884</name>
</gene>
<protein>
    <recommendedName>
        <fullName evidence="1">Large ribosomal subunit protein bL36</fullName>
    </recommendedName>
    <alternativeName>
        <fullName evidence="2">50S ribosomal protein L36</fullName>
    </alternativeName>
</protein>
<dbReference type="EMBL" id="CP000419">
    <property type="protein sequence ID" value="ABJ66998.1"/>
    <property type="molecule type" value="Genomic_DNA"/>
</dbReference>
<dbReference type="RefSeq" id="WP_000868345.1">
    <property type="nucleotide sequence ID" value="NZ_CP086001.1"/>
</dbReference>
<dbReference type="SMR" id="Q03IH4"/>
<dbReference type="GeneID" id="93860206"/>
<dbReference type="KEGG" id="ste:STER_1884"/>
<dbReference type="HOGENOM" id="CLU_135723_6_2_9"/>
<dbReference type="GO" id="GO:0005737">
    <property type="term" value="C:cytoplasm"/>
    <property type="evidence" value="ECO:0007669"/>
    <property type="project" value="UniProtKB-ARBA"/>
</dbReference>
<dbReference type="GO" id="GO:1990904">
    <property type="term" value="C:ribonucleoprotein complex"/>
    <property type="evidence" value="ECO:0007669"/>
    <property type="project" value="UniProtKB-KW"/>
</dbReference>
<dbReference type="GO" id="GO:0005840">
    <property type="term" value="C:ribosome"/>
    <property type="evidence" value="ECO:0007669"/>
    <property type="project" value="UniProtKB-KW"/>
</dbReference>
<dbReference type="GO" id="GO:0003735">
    <property type="term" value="F:structural constituent of ribosome"/>
    <property type="evidence" value="ECO:0007669"/>
    <property type="project" value="InterPro"/>
</dbReference>
<dbReference type="GO" id="GO:0006412">
    <property type="term" value="P:translation"/>
    <property type="evidence" value="ECO:0007669"/>
    <property type="project" value="UniProtKB-UniRule"/>
</dbReference>
<dbReference type="HAMAP" id="MF_00251">
    <property type="entry name" value="Ribosomal_bL36"/>
    <property type="match status" value="1"/>
</dbReference>
<dbReference type="InterPro" id="IPR000473">
    <property type="entry name" value="Ribosomal_bL36"/>
</dbReference>
<dbReference type="InterPro" id="IPR035977">
    <property type="entry name" value="Ribosomal_bL36_sp"/>
</dbReference>
<dbReference type="NCBIfam" id="TIGR01022">
    <property type="entry name" value="rpmJ_bact"/>
    <property type="match status" value="1"/>
</dbReference>
<dbReference type="PANTHER" id="PTHR42888">
    <property type="entry name" value="50S RIBOSOMAL PROTEIN L36, CHLOROPLASTIC"/>
    <property type="match status" value="1"/>
</dbReference>
<dbReference type="PANTHER" id="PTHR42888:SF1">
    <property type="entry name" value="LARGE RIBOSOMAL SUBUNIT PROTEIN BL36C"/>
    <property type="match status" value="1"/>
</dbReference>
<dbReference type="Pfam" id="PF00444">
    <property type="entry name" value="Ribosomal_L36"/>
    <property type="match status" value="1"/>
</dbReference>
<dbReference type="SUPFAM" id="SSF57840">
    <property type="entry name" value="Ribosomal protein L36"/>
    <property type="match status" value="1"/>
</dbReference>
<dbReference type="PROSITE" id="PS00828">
    <property type="entry name" value="RIBOSOMAL_L36"/>
    <property type="match status" value="1"/>
</dbReference>
<accession>Q03IH4</accession>